<keyword id="KW-0067">ATP-binding</keyword>
<keyword id="KW-0963">Cytoplasm</keyword>
<keyword id="KW-1015">Disulfide bond</keyword>
<keyword id="KW-0547">Nucleotide-binding</keyword>
<keyword id="KW-1185">Reference proteome</keyword>
<keyword id="KW-0694">RNA-binding</keyword>
<keyword id="KW-0808">Transferase</keyword>
<keyword id="KW-0819">tRNA processing</keyword>
<keyword id="KW-0820">tRNA-binding</keyword>
<organism>
    <name type="scientific">Zymomonas mobilis subsp. mobilis (strain ATCC 31821 / ZM4 / CP4)</name>
    <dbReference type="NCBI Taxonomy" id="264203"/>
    <lineage>
        <taxon>Bacteria</taxon>
        <taxon>Pseudomonadati</taxon>
        <taxon>Pseudomonadota</taxon>
        <taxon>Alphaproteobacteria</taxon>
        <taxon>Sphingomonadales</taxon>
        <taxon>Zymomonadaceae</taxon>
        <taxon>Zymomonas</taxon>
    </lineage>
</organism>
<gene>
    <name evidence="1" type="primary">mnmA</name>
    <name type="ordered locus">ZMO0769</name>
</gene>
<dbReference type="EC" id="2.8.1.13" evidence="1"/>
<dbReference type="EMBL" id="AE008692">
    <property type="protein sequence ID" value="AAV89393.2"/>
    <property type="molecule type" value="Genomic_DNA"/>
</dbReference>
<dbReference type="RefSeq" id="WP_011240647.1">
    <property type="nucleotide sequence ID" value="NZ_CP035711.1"/>
</dbReference>
<dbReference type="SMR" id="Q5NPG7"/>
<dbReference type="STRING" id="264203.ZMO0769"/>
<dbReference type="KEGG" id="zmo:ZMO0769"/>
<dbReference type="eggNOG" id="COG0482">
    <property type="taxonomic scope" value="Bacteria"/>
</dbReference>
<dbReference type="HOGENOM" id="CLU_035188_0_1_5"/>
<dbReference type="Proteomes" id="UP000001173">
    <property type="component" value="Chromosome"/>
</dbReference>
<dbReference type="GO" id="GO:0005737">
    <property type="term" value="C:cytoplasm"/>
    <property type="evidence" value="ECO:0007669"/>
    <property type="project" value="UniProtKB-SubCell"/>
</dbReference>
<dbReference type="GO" id="GO:0005524">
    <property type="term" value="F:ATP binding"/>
    <property type="evidence" value="ECO:0007669"/>
    <property type="project" value="UniProtKB-KW"/>
</dbReference>
<dbReference type="GO" id="GO:0000049">
    <property type="term" value="F:tRNA binding"/>
    <property type="evidence" value="ECO:0007669"/>
    <property type="project" value="UniProtKB-KW"/>
</dbReference>
<dbReference type="GO" id="GO:0103016">
    <property type="term" value="F:tRNA-uridine 2-sulfurtransferase activity"/>
    <property type="evidence" value="ECO:0007669"/>
    <property type="project" value="UniProtKB-EC"/>
</dbReference>
<dbReference type="GO" id="GO:0002143">
    <property type="term" value="P:tRNA wobble position uridine thiolation"/>
    <property type="evidence" value="ECO:0007669"/>
    <property type="project" value="TreeGrafter"/>
</dbReference>
<dbReference type="CDD" id="cd01998">
    <property type="entry name" value="MnmA_TRMU-like"/>
    <property type="match status" value="1"/>
</dbReference>
<dbReference type="FunFam" id="2.30.30.280:FF:000001">
    <property type="entry name" value="tRNA-specific 2-thiouridylase MnmA"/>
    <property type="match status" value="1"/>
</dbReference>
<dbReference type="FunFam" id="3.40.50.620:FF:000115">
    <property type="entry name" value="tRNA-specific 2-thiouridylase MnmA"/>
    <property type="match status" value="1"/>
</dbReference>
<dbReference type="Gene3D" id="2.30.30.280">
    <property type="entry name" value="Adenine nucleotide alpha hydrolases-like domains"/>
    <property type="match status" value="1"/>
</dbReference>
<dbReference type="Gene3D" id="3.40.50.620">
    <property type="entry name" value="HUPs"/>
    <property type="match status" value="1"/>
</dbReference>
<dbReference type="Gene3D" id="2.40.30.10">
    <property type="entry name" value="Translation factors"/>
    <property type="match status" value="1"/>
</dbReference>
<dbReference type="HAMAP" id="MF_00144">
    <property type="entry name" value="tRNA_thiouridyl_MnmA"/>
    <property type="match status" value="1"/>
</dbReference>
<dbReference type="InterPro" id="IPR004506">
    <property type="entry name" value="MnmA-like"/>
</dbReference>
<dbReference type="InterPro" id="IPR046885">
    <property type="entry name" value="MnmA-like_C"/>
</dbReference>
<dbReference type="InterPro" id="IPR046884">
    <property type="entry name" value="MnmA-like_central"/>
</dbReference>
<dbReference type="InterPro" id="IPR023382">
    <property type="entry name" value="MnmA-like_central_sf"/>
</dbReference>
<dbReference type="InterPro" id="IPR014729">
    <property type="entry name" value="Rossmann-like_a/b/a_fold"/>
</dbReference>
<dbReference type="NCBIfam" id="NF001138">
    <property type="entry name" value="PRK00143.1"/>
    <property type="match status" value="1"/>
</dbReference>
<dbReference type="NCBIfam" id="TIGR00420">
    <property type="entry name" value="trmU"/>
    <property type="match status" value="1"/>
</dbReference>
<dbReference type="PANTHER" id="PTHR11933:SF5">
    <property type="entry name" value="MITOCHONDRIAL TRNA-SPECIFIC 2-THIOURIDYLASE 1"/>
    <property type="match status" value="1"/>
</dbReference>
<dbReference type="PANTHER" id="PTHR11933">
    <property type="entry name" value="TRNA 5-METHYLAMINOMETHYL-2-THIOURIDYLATE -METHYLTRANSFERASE"/>
    <property type="match status" value="1"/>
</dbReference>
<dbReference type="Pfam" id="PF03054">
    <property type="entry name" value="tRNA_Me_trans"/>
    <property type="match status" value="1"/>
</dbReference>
<dbReference type="Pfam" id="PF20258">
    <property type="entry name" value="tRNA_Me_trans_C"/>
    <property type="match status" value="1"/>
</dbReference>
<dbReference type="Pfam" id="PF20259">
    <property type="entry name" value="tRNA_Me_trans_M"/>
    <property type="match status" value="1"/>
</dbReference>
<dbReference type="SUPFAM" id="SSF52402">
    <property type="entry name" value="Adenine nucleotide alpha hydrolases-like"/>
    <property type="match status" value="1"/>
</dbReference>
<comment type="function">
    <text evidence="1">Catalyzes the 2-thiolation of uridine at the wobble position (U34) of tRNA, leading to the formation of s(2)U34.</text>
</comment>
<comment type="catalytic activity">
    <reaction evidence="1">
        <text>S-sulfanyl-L-cysteinyl-[protein] + uridine(34) in tRNA + AH2 + ATP = 2-thiouridine(34) in tRNA + L-cysteinyl-[protein] + A + AMP + diphosphate + H(+)</text>
        <dbReference type="Rhea" id="RHEA:47032"/>
        <dbReference type="Rhea" id="RHEA-COMP:10131"/>
        <dbReference type="Rhea" id="RHEA-COMP:11726"/>
        <dbReference type="Rhea" id="RHEA-COMP:11727"/>
        <dbReference type="Rhea" id="RHEA-COMP:11728"/>
        <dbReference type="ChEBI" id="CHEBI:13193"/>
        <dbReference type="ChEBI" id="CHEBI:15378"/>
        <dbReference type="ChEBI" id="CHEBI:17499"/>
        <dbReference type="ChEBI" id="CHEBI:29950"/>
        <dbReference type="ChEBI" id="CHEBI:30616"/>
        <dbReference type="ChEBI" id="CHEBI:33019"/>
        <dbReference type="ChEBI" id="CHEBI:61963"/>
        <dbReference type="ChEBI" id="CHEBI:65315"/>
        <dbReference type="ChEBI" id="CHEBI:87170"/>
        <dbReference type="ChEBI" id="CHEBI:456215"/>
        <dbReference type="EC" id="2.8.1.13"/>
    </reaction>
</comment>
<comment type="subcellular location">
    <subcellularLocation>
        <location evidence="1">Cytoplasm</location>
    </subcellularLocation>
</comment>
<comment type="similarity">
    <text evidence="1">Belongs to the MnmA/TRMU family.</text>
</comment>
<reference key="1">
    <citation type="journal article" date="2005" name="Nat. Biotechnol.">
        <title>The genome sequence of the ethanologenic bacterium Zymomonas mobilis ZM4.</title>
        <authorList>
            <person name="Seo J.-S."/>
            <person name="Chong H."/>
            <person name="Park H.S."/>
            <person name="Yoon K.-O."/>
            <person name="Jung C."/>
            <person name="Kim J.J."/>
            <person name="Hong J.H."/>
            <person name="Kim H."/>
            <person name="Kim J.-H."/>
            <person name="Kil J.-I."/>
            <person name="Park C.J."/>
            <person name="Oh H.-M."/>
            <person name="Lee J.-S."/>
            <person name="Jin S.-J."/>
            <person name="Um H.-W."/>
            <person name="Lee H.-J."/>
            <person name="Oh S.-J."/>
            <person name="Kim J.Y."/>
            <person name="Kang H.L."/>
            <person name="Lee S.Y."/>
            <person name="Lee K.J."/>
            <person name="Kang H.S."/>
        </authorList>
    </citation>
    <scope>NUCLEOTIDE SEQUENCE [LARGE SCALE GENOMIC DNA]</scope>
    <source>
        <strain>ATCC 31821 / ZM4 / CP4</strain>
    </source>
</reference>
<name>MNMA_ZYMMO</name>
<accession>Q5NPG7</accession>
<feature type="chain" id="PRO_0000349870" description="tRNA-specific 2-thiouridylase MnmA">
    <location>
        <begin position="1"/>
        <end position="370"/>
    </location>
</feature>
<feature type="region of interest" description="Interaction with tRNA" evidence="1">
    <location>
        <begin position="159"/>
        <end position="161"/>
    </location>
</feature>
<feature type="active site" description="Nucleophile" evidence="1">
    <location>
        <position position="113"/>
    </location>
</feature>
<feature type="active site" description="Cysteine persulfide intermediate" evidence="1">
    <location>
        <position position="209"/>
    </location>
</feature>
<feature type="binding site" evidence="1">
    <location>
        <begin position="19"/>
        <end position="26"/>
    </location>
    <ligand>
        <name>ATP</name>
        <dbReference type="ChEBI" id="CHEBI:30616"/>
    </ligand>
</feature>
<feature type="binding site" evidence="1">
    <location>
        <position position="45"/>
    </location>
    <ligand>
        <name>ATP</name>
        <dbReference type="ChEBI" id="CHEBI:30616"/>
    </ligand>
</feature>
<feature type="binding site" evidence="1">
    <location>
        <position position="137"/>
    </location>
    <ligand>
        <name>ATP</name>
        <dbReference type="ChEBI" id="CHEBI:30616"/>
    </ligand>
</feature>
<feature type="site" description="Interaction with tRNA" evidence="1">
    <location>
        <position position="138"/>
    </location>
</feature>
<feature type="site" description="Interaction with tRNA" evidence="1">
    <location>
        <position position="341"/>
    </location>
</feature>
<feature type="disulfide bond" description="Alternate" evidence="1">
    <location>
        <begin position="113"/>
        <end position="209"/>
    </location>
</feature>
<proteinExistence type="inferred from homology"/>
<protein>
    <recommendedName>
        <fullName evidence="1">tRNA-specific 2-thiouridylase MnmA</fullName>
        <ecNumber evidence="1">2.8.1.13</ecNumber>
    </recommendedName>
</protein>
<sequence length="370" mass="40394">MSIDFQIDKPKSAQRIVVAMSGGVDSSVVAALAKATGAETIGITLQLYDHGAAVGRKGSCCAGKDIRDARAVAEKIGIPHYVFDYENNFKESVIDDFVSEYVAGRTPVPCIRCNQGVKFTDLLNVARELGADCLATGHYVRRLVNNDRVEMHRALDPARDQSYFLFATTKEQLDYLRFPLGGLPKPKVREMAAELGLSVAMKADSQDICFVPDGDYARIVEEKCPESGQGGDIVDMQGRVLGKHSGLIHFTVGQRRGLEIGGQKEPLYVIRLDPAKKQLVVGPRQALAVAKAEIKEVNWLVDGFDREMQVKIRSAAKPVSARFDGKELVFEKPEYGVSPGQAAVFYDGDQVLGGGWIKETTPAVFDDLAE</sequence>
<evidence type="ECO:0000255" key="1">
    <source>
        <dbReference type="HAMAP-Rule" id="MF_00144"/>
    </source>
</evidence>